<organism>
    <name type="scientific">Rattus norvegicus</name>
    <name type="common">Rat</name>
    <dbReference type="NCBI Taxonomy" id="10116"/>
    <lineage>
        <taxon>Eukaryota</taxon>
        <taxon>Metazoa</taxon>
        <taxon>Chordata</taxon>
        <taxon>Craniata</taxon>
        <taxon>Vertebrata</taxon>
        <taxon>Euteleostomi</taxon>
        <taxon>Mammalia</taxon>
        <taxon>Eutheria</taxon>
        <taxon>Euarchontoglires</taxon>
        <taxon>Glires</taxon>
        <taxon>Rodentia</taxon>
        <taxon>Myomorpha</taxon>
        <taxon>Muroidea</taxon>
        <taxon>Muridae</taxon>
        <taxon>Murinae</taxon>
        <taxon>Rattus</taxon>
    </lineage>
</organism>
<gene>
    <name type="primary">Ptp4a1</name>
    <name type="synonym">Prl1</name>
</gene>
<dbReference type="EC" id="3.1.3.48" evidence="6"/>
<dbReference type="EMBL" id="L27843">
    <property type="protein sequence ID" value="AAA41935.1"/>
    <property type="molecule type" value="mRNA"/>
</dbReference>
<dbReference type="EMBL" id="AY062269">
    <property type="protein sequence ID" value="AAL38661.1"/>
    <property type="molecule type" value="mRNA"/>
</dbReference>
<dbReference type="EMBL" id="BC081772">
    <property type="protein sequence ID" value="AAH81772.1"/>
    <property type="molecule type" value="mRNA"/>
</dbReference>
<dbReference type="EMBL" id="BC097307">
    <property type="protein sequence ID" value="AAH97307.1"/>
    <property type="molecule type" value="mRNA"/>
</dbReference>
<dbReference type="RefSeq" id="NP_113767.1">
    <property type="nucleotide sequence ID" value="NM_031579.3"/>
</dbReference>
<dbReference type="RefSeq" id="XP_002727244.1">
    <property type="nucleotide sequence ID" value="XM_002727198.5"/>
</dbReference>
<dbReference type="RefSeq" id="XP_006244733.1">
    <property type="nucleotide sequence ID" value="XM_006244671.3"/>
</dbReference>
<dbReference type="RefSeq" id="XP_008765001.1">
    <property type="nucleotide sequence ID" value="XM_008766779.2"/>
</dbReference>
<dbReference type="PDB" id="1X24">
    <property type="method" value="X-ray"/>
    <property type="resolution" value="3.20 A"/>
    <property type="chains" value="A/B=1-160"/>
</dbReference>
<dbReference type="PDB" id="1ZCK">
    <property type="method" value="X-ray"/>
    <property type="resolution" value="1.90 A"/>
    <property type="chains" value="A/B/C=7-160"/>
</dbReference>
<dbReference type="PDB" id="1ZCL">
    <property type="method" value="X-ray"/>
    <property type="resolution" value="2.90 A"/>
    <property type="chains" value="A/B=1-160"/>
</dbReference>
<dbReference type="PDB" id="3RZ2">
    <property type="method" value="X-ray"/>
    <property type="resolution" value="2.80 A"/>
    <property type="chains" value="A/B=1-169"/>
</dbReference>
<dbReference type="PDBsum" id="1X24"/>
<dbReference type="PDBsum" id="1ZCK"/>
<dbReference type="PDBsum" id="1ZCL"/>
<dbReference type="PDBsum" id="3RZ2"/>
<dbReference type="BMRB" id="Q78EG7"/>
<dbReference type="SMR" id="Q78EG7"/>
<dbReference type="FunCoup" id="Q78EG7">
    <property type="interactions" value="2250"/>
</dbReference>
<dbReference type="STRING" id="10116.ENSRNOP00000016237"/>
<dbReference type="PhosphoSitePlus" id="Q78EG7"/>
<dbReference type="jPOST" id="Q78EG7"/>
<dbReference type="PaxDb" id="10116-ENSRNOP00000016237"/>
<dbReference type="Ensembl" id="ENSRNOT00000016237.4">
    <property type="protein sequence ID" value="ENSRNOP00000016237.2"/>
    <property type="gene ID" value="ENSRNOG00000011771.4"/>
</dbReference>
<dbReference type="GeneID" id="29463"/>
<dbReference type="KEGG" id="rno:29463"/>
<dbReference type="UCSC" id="RGD:61970">
    <property type="organism name" value="rat"/>
</dbReference>
<dbReference type="AGR" id="RGD:61970"/>
<dbReference type="CTD" id="7803"/>
<dbReference type="RGD" id="61970">
    <property type="gene designation" value="Ptp4a1"/>
</dbReference>
<dbReference type="eggNOG" id="KOG2836">
    <property type="taxonomic scope" value="Eukaryota"/>
</dbReference>
<dbReference type="GeneTree" id="ENSGT00940000154406"/>
<dbReference type="HOGENOM" id="CLU_099263_1_0_1"/>
<dbReference type="InParanoid" id="Q78EG7"/>
<dbReference type="OMA" id="IQVHGWT"/>
<dbReference type="OrthoDB" id="5632at2759"/>
<dbReference type="PhylomeDB" id="Q78EG7"/>
<dbReference type="TreeFam" id="TF313384"/>
<dbReference type="EvolutionaryTrace" id="Q78EG7"/>
<dbReference type="PRO" id="PR:Q78EG7"/>
<dbReference type="Proteomes" id="UP000002494">
    <property type="component" value="Chromosome 9"/>
</dbReference>
<dbReference type="Bgee" id="ENSRNOG00000011771">
    <property type="expression patterns" value="Expressed in skeletal muscle tissue and 19 other cell types or tissues"/>
</dbReference>
<dbReference type="GO" id="GO:0005737">
    <property type="term" value="C:cytoplasm"/>
    <property type="evidence" value="ECO:0000266"/>
    <property type="project" value="RGD"/>
</dbReference>
<dbReference type="GO" id="GO:0009898">
    <property type="term" value="C:cytoplasmic side of plasma membrane"/>
    <property type="evidence" value="ECO:0000266"/>
    <property type="project" value="RGD"/>
</dbReference>
<dbReference type="GO" id="GO:0005769">
    <property type="term" value="C:early endosome"/>
    <property type="evidence" value="ECO:0007669"/>
    <property type="project" value="UniProtKB-SubCell"/>
</dbReference>
<dbReference type="GO" id="GO:0005783">
    <property type="term" value="C:endoplasmic reticulum"/>
    <property type="evidence" value="ECO:0007669"/>
    <property type="project" value="UniProtKB-SubCell"/>
</dbReference>
<dbReference type="GO" id="GO:0005634">
    <property type="term" value="C:nucleus"/>
    <property type="evidence" value="ECO:0000318"/>
    <property type="project" value="GO_Central"/>
</dbReference>
<dbReference type="GO" id="GO:0005819">
    <property type="term" value="C:spindle"/>
    <property type="evidence" value="ECO:0007669"/>
    <property type="project" value="UniProtKB-SubCell"/>
</dbReference>
<dbReference type="GO" id="GO:0004725">
    <property type="term" value="F:protein tyrosine phosphatase activity"/>
    <property type="evidence" value="ECO:0000314"/>
    <property type="project" value="RGD"/>
</dbReference>
<dbReference type="GO" id="GO:0030335">
    <property type="term" value="P:positive regulation of cell migration"/>
    <property type="evidence" value="ECO:0000266"/>
    <property type="project" value="RGD"/>
</dbReference>
<dbReference type="CDD" id="cd18537">
    <property type="entry name" value="PTP-IVa1"/>
    <property type="match status" value="1"/>
</dbReference>
<dbReference type="FunFam" id="3.90.190.10:FF:000012">
    <property type="entry name" value="protein tyrosine phosphatase type IVA 1"/>
    <property type="match status" value="1"/>
</dbReference>
<dbReference type="Gene3D" id="3.90.190.10">
    <property type="entry name" value="Protein tyrosine phosphatase superfamily"/>
    <property type="match status" value="1"/>
</dbReference>
<dbReference type="InterPro" id="IPR029021">
    <property type="entry name" value="Prot-tyrosine_phosphatase-like"/>
</dbReference>
<dbReference type="InterPro" id="IPR050561">
    <property type="entry name" value="PTP"/>
</dbReference>
<dbReference type="InterPro" id="IPR003595">
    <property type="entry name" value="Tyr_Pase_cat"/>
</dbReference>
<dbReference type="InterPro" id="IPR000387">
    <property type="entry name" value="Tyr_Pase_dom"/>
</dbReference>
<dbReference type="InterPro" id="IPR020422">
    <property type="entry name" value="TYR_PHOSPHATASE_DUAL_dom"/>
</dbReference>
<dbReference type="PANTHER" id="PTHR23339">
    <property type="entry name" value="TYROSINE SPECIFIC PROTEIN PHOSPHATASE AND DUAL SPECIFICITY PROTEIN PHOSPHATASE"/>
    <property type="match status" value="1"/>
</dbReference>
<dbReference type="Pfam" id="PF22785">
    <property type="entry name" value="Tc-R-P"/>
    <property type="match status" value="1"/>
</dbReference>
<dbReference type="SMART" id="SM00404">
    <property type="entry name" value="PTPc_motif"/>
    <property type="match status" value="1"/>
</dbReference>
<dbReference type="SUPFAM" id="SSF52799">
    <property type="entry name" value="(Phosphotyrosine protein) phosphatases II"/>
    <property type="match status" value="1"/>
</dbReference>
<dbReference type="PROSITE" id="PS50056">
    <property type="entry name" value="TYR_PHOSPHATASE_2"/>
    <property type="match status" value="1"/>
</dbReference>
<dbReference type="PROSITE" id="PS50054">
    <property type="entry name" value="TYR_PHOSPHATASE_DUAL"/>
    <property type="match status" value="1"/>
</dbReference>
<protein>
    <recommendedName>
        <fullName>Protein tyrosine phosphatase type IVA 1</fullName>
        <ecNumber evidence="6">3.1.3.48</ecNumber>
    </recommendedName>
    <alternativeName>
        <fullName>Protein-tyrosine phosphatase 4a1</fullName>
    </alternativeName>
    <alternativeName>
        <fullName>Protein-tyrosine phosphatase of regenerating liver 1</fullName>
        <shortName>PRL-1</shortName>
    </alternativeName>
</protein>
<evidence type="ECO:0000250" key="1"/>
<evidence type="ECO:0000250" key="2">
    <source>
        <dbReference type="UniProtKB" id="Q93096"/>
    </source>
</evidence>
<evidence type="ECO:0000255" key="3">
    <source>
        <dbReference type="PROSITE-ProRule" id="PRU00160"/>
    </source>
</evidence>
<evidence type="ECO:0000269" key="4">
    <source>
    </source>
</evidence>
<evidence type="ECO:0000269" key="5">
    <source>
    </source>
</evidence>
<evidence type="ECO:0000269" key="6">
    <source>
    </source>
</evidence>
<evidence type="ECO:0000269" key="7">
    <source>
    </source>
</evidence>
<evidence type="ECO:0000305" key="8"/>
<evidence type="ECO:0007829" key="9">
    <source>
        <dbReference type="PDB" id="1ZCK"/>
    </source>
</evidence>
<evidence type="ECO:0007829" key="10">
    <source>
        <dbReference type="PDB" id="3RZ2"/>
    </source>
</evidence>
<accession>Q78EG7</accession>
<accession>Q4QRA5</accession>
<accession>Q8VH48</accession>
<reference key="1">
    <citation type="journal article" date="1994" name="Mol. Cell. Biol.">
        <title>PRL-1, a unique nuclear protein tyrosine phosphatase, affects cell growth.</title>
        <authorList>
            <person name="Diamond R.H."/>
            <person name="Cressman D.E."/>
            <person name="Laz T.M."/>
            <person name="Abrams C.S."/>
            <person name="Taub R."/>
        </authorList>
    </citation>
    <scope>NUCLEOTIDE SEQUENCE [MRNA]</scope>
    <scope>CATALYTIC ACTIVITY</scope>
    <scope>ACTIVITY REGULATION</scope>
    <scope>SUBCELLULAR LOCATION</scope>
    <scope>TISSUE SPECIFICITY</scope>
    <scope>INDUCTION</scope>
    <scope>MUTAGENESIS OF CYS-104</scope>
    <source>
        <tissue>Regenerating liver</tissue>
    </source>
</reference>
<reference key="2">
    <citation type="submission" date="2001-11" db="EMBL/GenBank/DDBJ databases">
        <authorList>
            <person name="Heneberg P."/>
            <person name="Draber P."/>
        </authorList>
    </citation>
    <scope>NUCLEOTIDE SEQUENCE [MRNA]</scope>
    <source>
        <strain>Wistar</strain>
        <tissue>Basophil</tissue>
    </source>
</reference>
<reference key="3">
    <citation type="journal article" date="2004" name="Genome Res.">
        <title>The status, quality, and expansion of the NIH full-length cDNA project: the Mammalian Gene Collection (MGC).</title>
        <authorList>
            <consortium name="The MGC Project Team"/>
        </authorList>
    </citation>
    <scope>NUCLEOTIDE SEQUENCE [LARGE SCALE MRNA]</scope>
    <source>
        <tissue>Lung</tissue>
        <tissue>Placenta</tissue>
    </source>
</reference>
<reference key="4">
    <citation type="journal article" date="1996" name="Brain Res. Mol. Brain Res.">
        <title>PRL-1, a protein tyrosine phosphatase, is expressed in neurons and oligodendrocytes in the brain and induced in the cerebral cortex following transient forebrain ischemia.</title>
        <authorList>
            <person name="Takano S."/>
            <person name="Fukuyama H."/>
            <person name="Fukumoto M."/>
            <person name="Kimura J."/>
            <person name="Xue J.H."/>
            <person name="Ohashi H."/>
            <person name="Fujita J."/>
        </authorList>
    </citation>
    <scope>TISSUE SPECIFICITY</scope>
    <scope>DEVELOPMENTAL STAGE</scope>
</reference>
<reference key="5">
    <citation type="journal article" date="2000" name="Am. J. Physiol.">
        <title>PRL-1 PTPase expression is developmentally regulated with tissue-specific patterns in epithelial tissues.</title>
        <authorList>
            <person name="Kong W."/>
            <person name="Swain G.P."/>
            <person name="Li S."/>
            <person name="Diamond R.H."/>
        </authorList>
    </citation>
    <scope>TISSUE SPECIFICITY</scope>
    <scope>DEVELOPMENTAL STAGE</scope>
</reference>
<reference key="6">
    <citation type="journal article" date="2000" name="J. Neurosci. Res.">
        <title>Analysis of oligodendroglial differentiation using cDNA arrays.</title>
        <authorList>
            <person name="Scarlato M."/>
            <person name="Beesley J."/>
            <person name="Pleasure D."/>
        </authorList>
    </citation>
    <scope>DEVELOPMENTAL STAGE</scope>
</reference>
<reference key="7">
    <citation type="journal article" date="2005" name="Biochemistry">
        <title>Structure and biochemical properties of PRL-1, a phosphatase implicated in cell growth, differentiation, and tumor invasion.</title>
        <authorList>
            <person name="Sun J.-P."/>
            <person name="Wang W.-Q."/>
            <person name="Yang H."/>
            <person name="Liu S."/>
            <person name="Liang F."/>
            <person name="Fedorov A.A."/>
            <person name="Almo S.C."/>
            <person name="Zhang Z.-Y."/>
        </authorList>
    </citation>
    <scope>X-RAY CRYSTALLOGRAPHY (1.9 ANGSTROMS) OF 1-160</scope>
</reference>
<proteinExistence type="evidence at protein level"/>
<feature type="chain" id="PRO_0000094784" description="Protein tyrosine phosphatase type IVA 1">
    <location>
        <begin position="1"/>
        <end position="170"/>
    </location>
</feature>
<feature type="propeptide" id="PRO_0000396730" description="Removed in mature form" evidence="1">
    <location>
        <begin position="171"/>
        <end position="173"/>
    </location>
</feature>
<feature type="domain" description="Tyrosine-protein phosphatase" evidence="3">
    <location>
        <begin position="8"/>
        <end position="161"/>
    </location>
</feature>
<feature type="region of interest" description="Interaction with ATF5" evidence="1">
    <location>
        <begin position="97"/>
        <end position="132"/>
    </location>
</feature>
<feature type="active site" description="Proton donor" evidence="1">
    <location>
        <position position="72"/>
    </location>
</feature>
<feature type="active site" description="Phosphocysteine intermediate" evidence="3">
    <location>
        <position position="104"/>
    </location>
</feature>
<feature type="binding site" evidence="1">
    <location>
        <begin position="105"/>
        <end position="110"/>
    </location>
    <ligand>
        <name>phosphate</name>
        <dbReference type="ChEBI" id="CHEBI:43474"/>
    </ligand>
</feature>
<feature type="binding site" evidence="1">
    <location>
        <position position="110"/>
    </location>
    <ligand>
        <name>substrate</name>
    </ligand>
</feature>
<feature type="modified residue" description="Cysteine methyl ester" evidence="1">
    <location>
        <position position="170"/>
    </location>
</feature>
<feature type="lipid moiety-binding region" description="S-farnesyl cysteine" evidence="2">
    <location>
        <position position="170"/>
    </location>
</feature>
<feature type="disulfide bond" evidence="1">
    <location>
        <begin position="49"/>
        <end position="104"/>
    </location>
</feature>
<feature type="mutagenesis site" description="Abolishes enzymatic activity." evidence="6">
    <original>C</original>
    <variation>S</variation>
    <location>
        <position position="104"/>
    </location>
</feature>
<feature type="sequence conflict" description="In Ref. 2; AAL38661." evidence="8" ref="2">
    <original>C</original>
    <variation>W</variation>
    <location>
        <position position="170"/>
    </location>
</feature>
<feature type="strand" evidence="9">
    <location>
        <begin position="10"/>
        <end position="13"/>
    </location>
</feature>
<feature type="strand" evidence="9">
    <location>
        <begin position="18"/>
        <end position="21"/>
    </location>
</feature>
<feature type="turn" evidence="9">
    <location>
        <begin position="27"/>
        <end position="29"/>
    </location>
</feature>
<feature type="helix" evidence="9">
    <location>
        <begin position="30"/>
        <end position="39"/>
    </location>
</feature>
<feature type="strand" evidence="9">
    <location>
        <begin position="42"/>
        <end position="47"/>
    </location>
</feature>
<feature type="helix" evidence="9">
    <location>
        <begin position="56"/>
        <end position="60"/>
    </location>
</feature>
<feature type="strand" evidence="9">
    <location>
        <begin position="64"/>
        <end position="67"/>
    </location>
</feature>
<feature type="strand" evidence="10">
    <location>
        <begin position="72"/>
        <end position="74"/>
    </location>
</feature>
<feature type="helix" evidence="9">
    <location>
        <begin position="78"/>
        <end position="94"/>
    </location>
</feature>
<feature type="strand" evidence="9">
    <location>
        <begin position="99"/>
        <end position="103"/>
    </location>
</feature>
<feature type="strand" evidence="9">
    <location>
        <begin position="105"/>
        <end position="108"/>
    </location>
</feature>
<feature type="turn" evidence="9">
    <location>
        <begin position="109"/>
        <end position="111"/>
    </location>
</feature>
<feature type="helix" evidence="9">
    <location>
        <begin position="112"/>
        <end position="121"/>
    </location>
</feature>
<feature type="helix" evidence="9">
    <location>
        <begin position="126"/>
        <end position="134"/>
    </location>
</feature>
<feature type="strand" evidence="10">
    <location>
        <begin position="137"/>
        <end position="139"/>
    </location>
</feature>
<feature type="helix" evidence="9">
    <location>
        <begin position="143"/>
        <end position="151"/>
    </location>
</feature>
<keyword id="KW-0002">3D-structure</keyword>
<keyword id="KW-0131">Cell cycle</keyword>
<keyword id="KW-1003">Cell membrane</keyword>
<keyword id="KW-0963">Cytoplasm</keyword>
<keyword id="KW-0206">Cytoskeleton</keyword>
<keyword id="KW-0217">Developmental protein</keyword>
<keyword id="KW-1015">Disulfide bond</keyword>
<keyword id="KW-0256">Endoplasmic reticulum</keyword>
<keyword id="KW-0967">Endosome</keyword>
<keyword id="KW-0378">Hydrolase</keyword>
<keyword id="KW-0449">Lipoprotein</keyword>
<keyword id="KW-0472">Membrane</keyword>
<keyword id="KW-0488">Methylation</keyword>
<keyword id="KW-0539">Nucleus</keyword>
<keyword id="KW-0636">Prenylation</keyword>
<keyword id="KW-0904">Protein phosphatase</keyword>
<keyword id="KW-1185">Reference proteome</keyword>
<name>TP4A1_RAT</name>
<comment type="function">
    <text evidence="1">Protein tyrosine phosphatase which stimulates progression from G1 into S phase during mitosis. May play a role in the development and maintenance of differentiating epithelial tissues (By similarity).</text>
</comment>
<comment type="catalytic activity">
    <reaction evidence="6">
        <text>O-phospho-L-tyrosyl-[protein] + H2O = L-tyrosyl-[protein] + phosphate</text>
        <dbReference type="Rhea" id="RHEA:10684"/>
        <dbReference type="Rhea" id="RHEA-COMP:10136"/>
        <dbReference type="Rhea" id="RHEA-COMP:20101"/>
        <dbReference type="ChEBI" id="CHEBI:15377"/>
        <dbReference type="ChEBI" id="CHEBI:43474"/>
        <dbReference type="ChEBI" id="CHEBI:46858"/>
        <dbReference type="ChEBI" id="CHEBI:61978"/>
        <dbReference type="EC" id="3.1.3.48"/>
    </reaction>
</comment>
<comment type="activity regulation">
    <text evidence="6">Inhibited by sodium orthovanadate and pentamidine.</text>
</comment>
<comment type="subunit">
    <text evidence="1">Homotrimer. Interacts with ATF5 and tubulin (By similarity).</text>
</comment>
<comment type="subcellular location">
    <subcellularLocation>
        <location evidence="2">Cell membrane</location>
    </subcellularLocation>
    <subcellularLocation>
        <location evidence="2">Early endosome</location>
    </subcellularLocation>
    <subcellularLocation>
        <location evidence="2">Endoplasmic reticulum</location>
    </subcellularLocation>
    <subcellularLocation>
        <location evidence="2">Cytoplasm</location>
    </subcellularLocation>
    <subcellularLocation>
        <location evidence="2">Cytoplasm</location>
        <location evidence="2">Cytoskeleton</location>
        <location evidence="2">Spindle</location>
    </subcellularLocation>
    <subcellularLocation>
        <location evidence="6">Nucleus</location>
    </subcellularLocation>
    <text evidence="2">And mitotic spindle.</text>
</comment>
<comment type="tissue specificity">
    <text evidence="5 6 7">Brain (neurons and oligodendrocytes), skeletal muscle, regenerating liver, tumor cell lines. Expressed in enterocytes of the small intestine villi and colonic surface, zymogen cells of the stomach, proximal tubule cells of the kidney, bronchiolar epithelium, but not in esophagus and heart (at protein level).</text>
</comment>
<comment type="developmental stage">
    <text evidence="4 5 7">Expressed in fetal brain. Up-regulated during oligodendroglial differentiation. Expressed in the developing intestine, esophagus, liver, kidney and lung (at protein level).</text>
</comment>
<comment type="induction">
    <text evidence="6">By hepatectomy, mitogens, and ischemia-reperfusion.</text>
</comment>
<comment type="PTM">
    <text evidence="1">Farnesylated. Farnesylation is required for membrane targeting (By similarity).</text>
</comment>
<comment type="similarity">
    <text evidence="8">Belongs to the protein-tyrosine phosphatase family.</text>
</comment>
<sequence>MARMNRPAPVEVTYKNMRFLITHNPTNATLNKFIEELKKYGVTTIVRVCEATYDTTLVEKEGIHVLDWPFDDGAPPSNQIVDDWLSLVKIKFREEPGCCIAVHCVAGLGRAPVLVALALIEGGMKYEDAVQFIRQKRRGAFNSKQLLYLEKYRPKMRLRFKDSNGHRNNCCIQ</sequence>